<evidence type="ECO:0000255" key="1">
    <source>
        <dbReference type="HAMAP-Rule" id="MF_00185"/>
    </source>
</evidence>
<dbReference type="EC" id="2.5.1.75" evidence="1"/>
<dbReference type="EMBL" id="CP001100">
    <property type="protein sequence ID" value="ACF14386.1"/>
    <property type="molecule type" value="Genomic_DNA"/>
</dbReference>
<dbReference type="RefSeq" id="WP_012500469.1">
    <property type="nucleotide sequence ID" value="NC_011026.1"/>
</dbReference>
<dbReference type="SMR" id="B3QUD7"/>
<dbReference type="STRING" id="517418.Ctha_1932"/>
<dbReference type="KEGG" id="cts:Ctha_1932"/>
<dbReference type="eggNOG" id="COG0324">
    <property type="taxonomic scope" value="Bacteria"/>
</dbReference>
<dbReference type="HOGENOM" id="CLU_032616_0_1_10"/>
<dbReference type="OrthoDB" id="9776390at2"/>
<dbReference type="Proteomes" id="UP000001208">
    <property type="component" value="Chromosome"/>
</dbReference>
<dbReference type="GO" id="GO:0005524">
    <property type="term" value="F:ATP binding"/>
    <property type="evidence" value="ECO:0007669"/>
    <property type="project" value="UniProtKB-UniRule"/>
</dbReference>
<dbReference type="GO" id="GO:0052381">
    <property type="term" value="F:tRNA dimethylallyltransferase activity"/>
    <property type="evidence" value="ECO:0007669"/>
    <property type="project" value="UniProtKB-UniRule"/>
</dbReference>
<dbReference type="GO" id="GO:0006400">
    <property type="term" value="P:tRNA modification"/>
    <property type="evidence" value="ECO:0007669"/>
    <property type="project" value="TreeGrafter"/>
</dbReference>
<dbReference type="Gene3D" id="1.10.20.140">
    <property type="match status" value="1"/>
</dbReference>
<dbReference type="Gene3D" id="3.40.50.300">
    <property type="entry name" value="P-loop containing nucleotide triphosphate hydrolases"/>
    <property type="match status" value="1"/>
</dbReference>
<dbReference type="HAMAP" id="MF_00185">
    <property type="entry name" value="IPP_trans"/>
    <property type="match status" value="1"/>
</dbReference>
<dbReference type="InterPro" id="IPR039657">
    <property type="entry name" value="Dimethylallyltransferase"/>
</dbReference>
<dbReference type="InterPro" id="IPR018022">
    <property type="entry name" value="IPT"/>
</dbReference>
<dbReference type="InterPro" id="IPR027417">
    <property type="entry name" value="P-loop_NTPase"/>
</dbReference>
<dbReference type="NCBIfam" id="TIGR00174">
    <property type="entry name" value="miaA"/>
    <property type="match status" value="1"/>
</dbReference>
<dbReference type="PANTHER" id="PTHR11088">
    <property type="entry name" value="TRNA DIMETHYLALLYLTRANSFERASE"/>
    <property type="match status" value="1"/>
</dbReference>
<dbReference type="PANTHER" id="PTHR11088:SF60">
    <property type="entry name" value="TRNA DIMETHYLALLYLTRANSFERASE"/>
    <property type="match status" value="1"/>
</dbReference>
<dbReference type="Pfam" id="PF01715">
    <property type="entry name" value="IPPT"/>
    <property type="match status" value="1"/>
</dbReference>
<dbReference type="SUPFAM" id="SSF52540">
    <property type="entry name" value="P-loop containing nucleoside triphosphate hydrolases"/>
    <property type="match status" value="1"/>
</dbReference>
<reference key="1">
    <citation type="submission" date="2008-06" db="EMBL/GenBank/DDBJ databases">
        <title>Complete sequence of Chloroherpeton thalassium ATCC 35110.</title>
        <authorList>
            <consortium name="US DOE Joint Genome Institute"/>
            <person name="Lucas S."/>
            <person name="Copeland A."/>
            <person name="Lapidus A."/>
            <person name="Glavina del Rio T."/>
            <person name="Dalin E."/>
            <person name="Tice H."/>
            <person name="Bruce D."/>
            <person name="Goodwin L."/>
            <person name="Pitluck S."/>
            <person name="Schmutz J."/>
            <person name="Larimer F."/>
            <person name="Land M."/>
            <person name="Hauser L."/>
            <person name="Kyrpides N."/>
            <person name="Mikhailova N."/>
            <person name="Liu Z."/>
            <person name="Li T."/>
            <person name="Zhao F."/>
            <person name="Overmann J."/>
            <person name="Bryant D.A."/>
            <person name="Richardson P."/>
        </authorList>
    </citation>
    <scope>NUCLEOTIDE SEQUENCE [LARGE SCALE GENOMIC DNA]</scope>
    <source>
        <strain>ATCC 35110 / GB-78</strain>
    </source>
</reference>
<sequence>MPDSFSKIPIPVILGATGSGKTATAIALAELLDAEIVSADSRQIYKELDIGTAKPTAEERRAVKHHFIDELEVTEPYNAAQFATDAATRIEAIFSTGKNVVVAGGSTLYLQGLLQGFSKLPENSPEVREKLYADLAEHGATALYEKLKAADPEHAATLDPTKTQRLIRSLEILEVSSKTVSELKAAEILKPGFHFVPFGLALPRERLYEKINLRTDEMFKNGFLEEATRLFEKYAPVMRQGVKINALATVGYNELFSFLEGKLSLDEAKNLVKQHTRNYAKRQLTFFRNKFSADWINFAETDENALETAKQILMKLKKANPFC</sequence>
<protein>
    <recommendedName>
        <fullName evidence="1">tRNA dimethylallyltransferase</fullName>
        <ecNumber evidence="1">2.5.1.75</ecNumber>
    </recommendedName>
    <alternativeName>
        <fullName evidence="1">Dimethylallyl diphosphate:tRNA dimethylallyltransferase</fullName>
        <shortName evidence="1">DMAPP:tRNA dimethylallyltransferase</shortName>
        <shortName evidence="1">DMATase</shortName>
    </alternativeName>
    <alternativeName>
        <fullName evidence="1">Isopentenyl-diphosphate:tRNA isopentenyltransferase</fullName>
        <shortName evidence="1">IPP transferase</shortName>
        <shortName evidence="1">IPPT</shortName>
        <shortName evidence="1">IPTase</shortName>
    </alternativeName>
</protein>
<comment type="function">
    <text evidence="1">Catalyzes the transfer of a dimethylallyl group onto the adenine at position 37 in tRNAs that read codons beginning with uridine, leading to the formation of N6-(dimethylallyl)adenosine (i(6)A).</text>
</comment>
<comment type="catalytic activity">
    <reaction evidence="1">
        <text>adenosine(37) in tRNA + dimethylallyl diphosphate = N(6)-dimethylallyladenosine(37) in tRNA + diphosphate</text>
        <dbReference type="Rhea" id="RHEA:26482"/>
        <dbReference type="Rhea" id="RHEA-COMP:10162"/>
        <dbReference type="Rhea" id="RHEA-COMP:10375"/>
        <dbReference type="ChEBI" id="CHEBI:33019"/>
        <dbReference type="ChEBI" id="CHEBI:57623"/>
        <dbReference type="ChEBI" id="CHEBI:74411"/>
        <dbReference type="ChEBI" id="CHEBI:74415"/>
        <dbReference type="EC" id="2.5.1.75"/>
    </reaction>
</comment>
<comment type="cofactor">
    <cofactor evidence="1">
        <name>Mg(2+)</name>
        <dbReference type="ChEBI" id="CHEBI:18420"/>
    </cofactor>
</comment>
<comment type="subunit">
    <text evidence="1">Monomer.</text>
</comment>
<comment type="similarity">
    <text evidence="1">Belongs to the IPP transferase family.</text>
</comment>
<proteinExistence type="inferred from homology"/>
<accession>B3QUD7</accession>
<keyword id="KW-0067">ATP-binding</keyword>
<keyword id="KW-0460">Magnesium</keyword>
<keyword id="KW-0547">Nucleotide-binding</keyword>
<keyword id="KW-1185">Reference proteome</keyword>
<keyword id="KW-0808">Transferase</keyword>
<keyword id="KW-0819">tRNA processing</keyword>
<name>MIAA_CHLT3</name>
<organism>
    <name type="scientific">Chloroherpeton thalassium (strain ATCC 35110 / GB-78)</name>
    <dbReference type="NCBI Taxonomy" id="517418"/>
    <lineage>
        <taxon>Bacteria</taxon>
        <taxon>Pseudomonadati</taxon>
        <taxon>Chlorobiota</taxon>
        <taxon>Chlorobiia</taxon>
        <taxon>Chlorobiales</taxon>
        <taxon>Chloroherpetonaceae</taxon>
        <taxon>Chloroherpeton</taxon>
    </lineage>
</organism>
<feature type="chain" id="PRO_0000377121" description="tRNA dimethylallyltransferase">
    <location>
        <begin position="1"/>
        <end position="323"/>
    </location>
</feature>
<feature type="region of interest" description="Interaction with substrate tRNA" evidence="1">
    <location>
        <begin position="40"/>
        <end position="43"/>
    </location>
</feature>
<feature type="region of interest" description="Interaction with substrate tRNA" evidence="1">
    <location>
        <begin position="164"/>
        <end position="168"/>
    </location>
</feature>
<feature type="binding site" evidence="1">
    <location>
        <begin position="15"/>
        <end position="22"/>
    </location>
    <ligand>
        <name>ATP</name>
        <dbReference type="ChEBI" id="CHEBI:30616"/>
    </ligand>
</feature>
<feature type="binding site" evidence="1">
    <location>
        <begin position="17"/>
        <end position="22"/>
    </location>
    <ligand>
        <name>substrate</name>
    </ligand>
</feature>
<feature type="site" description="Interaction with substrate tRNA" evidence="1">
    <location>
        <position position="106"/>
    </location>
</feature>
<feature type="site" description="Interaction with substrate tRNA" evidence="1">
    <location>
        <position position="128"/>
    </location>
</feature>
<gene>
    <name evidence="1" type="primary">miaA</name>
    <name type="ordered locus">Ctha_1932</name>
</gene>